<proteinExistence type="evidence at protein level"/>
<organism>
    <name type="scientific">Hahella sp. (strain CCB-MM4)</name>
    <dbReference type="NCBI Taxonomy" id="1926491"/>
    <lineage>
        <taxon>Bacteria</taxon>
        <taxon>Pseudomonadati</taxon>
        <taxon>Pseudomonadota</taxon>
        <taxon>Gammaproteobacteria</taxon>
        <taxon>Oceanospirillales</taxon>
        <taxon>Hahellaceae</taxon>
        <taxon>Hahella</taxon>
    </lineage>
</organism>
<accession>A0A261GRE4</accession>
<name>TYR1_HAHS4</name>
<keyword id="KW-0002">3D-structure</keyword>
<keyword id="KW-0186">Copper</keyword>
<keyword id="KW-0479">Metal-binding</keyword>
<keyword id="KW-0560">Oxidoreductase</keyword>
<keyword id="KW-1185">Reference proteome</keyword>
<gene>
    <name evidence="5" type="ORF">BTA51_09820</name>
</gene>
<sequence>MKTRQNVYELKDDTLSWYSRAVEEMKSRDINDPTSWWYQGAIHGYATYPSALTYWHDATGYPPSQQTVNSGFWNRCQHGTWYFLPWHRMYLFYFEEIVAKAIRDMGGPADWTLPYWNYCEAYNTSASPSNQQQALQIPPEFGSSQGPNADFASLWIKNRRNYVLNKNNVNPWPAMNEAEFTNSGGDISFGGGVTGFAHSGGQTGQLESLPHNVVHTDINGAMGNPDTAALDPIFWLHHANIDRLWQVWLAQAGRSNPVVNAWKDFRFKFHDANGQPVEIAVKDVETTQLLGYVYTPAFPLSSTTPARRSVPAMDVVGATSASFSVGDHMAPLDLTMVPQPARGARLLAARGGDEKRTILRISNVKGKGATSPIDLFITNRDNEEGNEENFVGCIGLFGLENASTPSVESDGSGLNFAIDISDTINKLRQRDDWDEDNIRVQLIPQSKQDSDVEINVGRVSLHSEID</sequence>
<protein>
    <recommendedName>
        <fullName evidence="3">Tyrosinase HcTyr1</fullName>
        <ecNumber evidence="2">1.14.18.1</ecNumber>
    </recommendedName>
</protein>
<comment type="function">
    <text evidence="2">Copper-containing oxidase that catalyzes the conversion of L-tyrosine to L-dopa and then to L-dopaquinone (PubMed:39382070). Can use various phenols such as p-coumaric acid, phenol, pyrocatechol, syringol or pyrogallol (PubMed:39382070). Accepts several of the constituents of lignin and potentially participates in lignin functionalization (PubMed:39382070).</text>
</comment>
<comment type="catalytic activity">
    <reaction evidence="2">
        <text>L-tyrosine + O2 = L-dopaquinone + H2O</text>
        <dbReference type="Rhea" id="RHEA:18117"/>
        <dbReference type="ChEBI" id="CHEBI:15377"/>
        <dbReference type="ChEBI" id="CHEBI:15379"/>
        <dbReference type="ChEBI" id="CHEBI:57924"/>
        <dbReference type="ChEBI" id="CHEBI:58315"/>
        <dbReference type="EC" id="1.14.18.1"/>
    </reaction>
</comment>
<comment type="catalytic activity">
    <reaction evidence="2">
        <text>2 L-tyrosine + O2 = 2 L-dopa</text>
        <dbReference type="Rhea" id="RHEA:34283"/>
        <dbReference type="ChEBI" id="CHEBI:15379"/>
        <dbReference type="ChEBI" id="CHEBI:57504"/>
        <dbReference type="ChEBI" id="CHEBI:58315"/>
    </reaction>
</comment>
<comment type="catalytic activity">
    <reaction evidence="2">
        <text>2 L-dopa + O2 = 2 L-dopaquinone + 2 H2O</text>
        <dbReference type="Rhea" id="RHEA:34287"/>
        <dbReference type="ChEBI" id="CHEBI:15377"/>
        <dbReference type="ChEBI" id="CHEBI:15379"/>
        <dbReference type="ChEBI" id="CHEBI:57504"/>
        <dbReference type="ChEBI" id="CHEBI:57924"/>
        <dbReference type="EC" id="1.14.18.1"/>
    </reaction>
</comment>
<comment type="cofactor">
    <cofactor evidence="2">
        <name>Cu(2+)</name>
        <dbReference type="ChEBI" id="CHEBI:29036"/>
    </cofactor>
    <text evidence="1">Binds 2 copper ions per subunit.</text>
</comment>
<comment type="activity regulation">
    <text evidence="2">Cleavage of the lid-domain increases activity levels, affinity for substrate and turnover rate (PubMed:39382070). Exhibits high saline tolerance (PubMed:39382070).</text>
</comment>
<comment type="biophysicochemical properties">
    <kinetics>
        <KM evidence="2">0.187 mM for L-tyrosine (for latent-HcTyr1)</KM>
        <KM evidence="2">0.147 mM for L-tyrosine (for cleaved-HcTyr1)</KM>
        <KM evidence="2">0.37 mM for L-dopa (for latent-HcTyr1)</KM>
        <KM evidence="2">0.347 mM for L-dopa (for cleaved-HcTyr1)</KM>
        <text evidence="2">kcat is 0.71 sec(-1) with L-tyrosine as substrate (for latent-HcTyr1). kcat is 21.8 sec(-1) with L-tyrosine as substrate (for cleaved-HcTyr1). kcat is 1.00 sec(-1) with L-dopa as substrate (for latent-HcTyr1). kcat is 51.3 sec(-1) with L-dopa as substrate (for cleaved-HcTyr1).</text>
    </kinetics>
    <phDependence>
        <text evidence="2">Optimum pH is between 6 and 8 (PubMed:39382070). Exhibits a relatively broad pH range of activities (over 50% of activity between pH 4.5 and 9.5) (PubMed:39382070).</text>
    </phDependence>
    <temperatureDependence>
        <text evidence="2">Optimum temperature is approximately 40 degrees Celsius (PubMed:39382070). Maintains 60-50% of activity between 40 and 65 degrees Celsius and retains 30% of activity at 72 degrees Celsius (PubMed:39382070).</text>
    </temperatureDependence>
</comment>
<comment type="subunit">
    <text evidence="2">Monomer (PubMed:39382070). Formation of a dimer is observed when the protein is in its holo-form (PubMed:39382070).</text>
</comment>
<comment type="domain">
    <text evidence="2">The latent-HcTyr1 form contains a C-terminal lid-domain (LID), which is hampering substrate accessibility to the active site.</text>
</comment>
<comment type="PTM">
    <text evidence="2">In vitro, the C-terminal lid-domain is slowly cleaved off in an autoprocessive time dependent manner, leading to the formation of cleaved-HcTyr1 (PubMed:39382070). The processing rate is not influenced by factors such as pH and added metal ions (PubMed:39382070).</text>
</comment>
<comment type="similarity">
    <text evidence="4">Belongs to the tyrosinase family.</text>
</comment>
<reference evidence="5" key="1">
    <citation type="journal article" date="2017" name="Genome Announc.">
        <title>Draft Genome Sequence of Halophilic Hahella sp. Strain CCB-MM4, Isolated from Matang Mangrove Forest in Perak, Malaysia.</title>
        <authorList>
            <person name="Sam K.K."/>
            <person name="Lau N.S."/>
            <person name="Furusawa G."/>
            <person name="Amirul A.A."/>
        </authorList>
    </citation>
    <scope>NUCLEOTIDE SEQUENCE [LARGE SCALE GENOMIC DNA]</scope>
    <source>
        <strain>CCB-MM4</strain>
    </source>
</reference>
<reference evidence="6" key="2">
    <citation type="journal article" date="2024" name="FEBS Open Bio">
        <title>Characterization of two bacterial tyrosinases from the halophilic bacterium Hahella sp. CCB MM4 relevant for phenolic compounds oxidation in wetlands.</title>
        <authorList>
            <person name="de Almeida Santos G."/>
            <person name="Englund A.N.B."/>
            <person name="Dalleywater E.L."/>
            <person name="Roehr A.K."/>
        </authorList>
    </citation>
    <scope>X-RAY CRYSTALLOGRAPHY (1.97 ANGSTROMS)</scope>
    <scope>FUNCTION</scope>
    <scope>CATALYTIC ACTIVITY</scope>
    <scope>COFACTOR</scope>
    <scope>ACTIVITY REGULATION</scope>
    <scope>BIOPHYSICOCHEMICAL PROPERTIES</scope>
    <scope>SUBUNIT</scope>
    <scope>DOMAIN</scope>
    <scope>AUTO-CLEAVAGE</scope>
    <source>
        <strain>CCB-MM4</strain>
    </source>
</reference>
<feature type="chain" id="PRO_0000461818" description="Tyrosinase HcTyr1">
    <location>
        <begin position="1"/>
        <end position="466"/>
    </location>
</feature>
<feature type="binding site" evidence="1">
    <location>
        <position position="43"/>
    </location>
    <ligand>
        <name>Cu cation</name>
        <dbReference type="ChEBI" id="CHEBI:23378"/>
        <label>A</label>
    </ligand>
</feature>
<feature type="binding site" evidence="1">
    <location>
        <position position="78"/>
    </location>
    <ligand>
        <name>Cu cation</name>
        <dbReference type="ChEBI" id="CHEBI:23378"/>
        <label>A</label>
    </ligand>
</feature>
<feature type="binding site" evidence="1">
    <location>
        <position position="87"/>
    </location>
    <ligand>
        <name>Cu cation</name>
        <dbReference type="ChEBI" id="CHEBI:23378"/>
        <label>A</label>
    </ligand>
</feature>
<feature type="binding site" evidence="1">
    <location>
        <position position="211"/>
    </location>
    <ligand>
        <name>Cu cation</name>
        <dbReference type="ChEBI" id="CHEBI:23378"/>
        <label>B</label>
    </ligand>
</feature>
<feature type="binding site" evidence="1">
    <location>
        <position position="215"/>
    </location>
    <ligand>
        <name>Cu cation</name>
        <dbReference type="ChEBI" id="CHEBI:23378"/>
        <label>B</label>
    </ligand>
</feature>
<feature type="binding site" evidence="1">
    <location>
        <position position="238"/>
    </location>
    <ligand>
        <name>Cu cation</name>
        <dbReference type="ChEBI" id="CHEBI:23378"/>
        <label>B</label>
    </ligand>
</feature>
<dbReference type="EC" id="1.14.18.1" evidence="2"/>
<dbReference type="EMBL" id="MRYI01000003">
    <property type="protein sequence ID" value="OZG74058.1"/>
    <property type="molecule type" value="Genomic_DNA"/>
</dbReference>
<dbReference type="RefSeq" id="WP_094707238.1">
    <property type="nucleotide sequence ID" value="NZ_MRYI01000003.1"/>
</dbReference>
<dbReference type="PDB" id="8B74">
    <property type="method" value="X-ray"/>
    <property type="resolution" value="1.97 A"/>
    <property type="chains" value="A=1-466"/>
</dbReference>
<dbReference type="PDBsum" id="8B74"/>
<dbReference type="SMR" id="A0A261GRE4"/>
<dbReference type="OrthoDB" id="2874181at2"/>
<dbReference type="Proteomes" id="UP000215632">
    <property type="component" value="Unassembled WGS sequence"/>
</dbReference>
<dbReference type="GO" id="GO:0004097">
    <property type="term" value="F:catechol oxidase activity"/>
    <property type="evidence" value="ECO:0007669"/>
    <property type="project" value="InterPro"/>
</dbReference>
<dbReference type="GO" id="GO:0046872">
    <property type="term" value="F:metal ion binding"/>
    <property type="evidence" value="ECO:0007669"/>
    <property type="project" value="UniProtKB-KW"/>
</dbReference>
<dbReference type="Gene3D" id="1.10.1280.10">
    <property type="entry name" value="Di-copper center containing domain from catechol oxidase"/>
    <property type="match status" value="1"/>
</dbReference>
<dbReference type="InterPro" id="IPR008922">
    <property type="entry name" value="Di-copper_centre_dom_sf"/>
</dbReference>
<dbReference type="InterPro" id="IPR057190">
    <property type="entry name" value="DUF7868"/>
</dbReference>
<dbReference type="InterPro" id="IPR022739">
    <property type="entry name" value="Polyphenol_oxidase_cen"/>
</dbReference>
<dbReference type="InterPro" id="IPR050316">
    <property type="entry name" value="Tyrosinase/Hemocyanin"/>
</dbReference>
<dbReference type="InterPro" id="IPR002227">
    <property type="entry name" value="Tyrosinase_Cu-bd"/>
</dbReference>
<dbReference type="PANTHER" id="PTHR11474:SF76">
    <property type="entry name" value="SHKT DOMAIN-CONTAINING PROTEIN"/>
    <property type="match status" value="1"/>
</dbReference>
<dbReference type="PANTHER" id="PTHR11474">
    <property type="entry name" value="TYROSINASE FAMILY MEMBER"/>
    <property type="match status" value="1"/>
</dbReference>
<dbReference type="Pfam" id="PF25271">
    <property type="entry name" value="DUF7868"/>
    <property type="match status" value="1"/>
</dbReference>
<dbReference type="Pfam" id="PF12142">
    <property type="entry name" value="PPO1_DWL"/>
    <property type="match status" value="1"/>
</dbReference>
<dbReference type="Pfam" id="PF00264">
    <property type="entry name" value="Tyrosinase"/>
    <property type="match status" value="1"/>
</dbReference>
<dbReference type="PRINTS" id="PR00092">
    <property type="entry name" value="TYROSINASE"/>
</dbReference>
<dbReference type="SUPFAM" id="SSF48056">
    <property type="entry name" value="Di-copper centre-containing domain"/>
    <property type="match status" value="1"/>
</dbReference>
<dbReference type="PROSITE" id="PS00497">
    <property type="entry name" value="TYROSINASE_1"/>
    <property type="match status" value="1"/>
</dbReference>
<dbReference type="PROSITE" id="PS00498">
    <property type="entry name" value="TYROSINASE_2"/>
    <property type="match status" value="1"/>
</dbReference>
<evidence type="ECO:0000250" key="1">
    <source>
        <dbReference type="UniProtKB" id="Q9ZP19"/>
    </source>
</evidence>
<evidence type="ECO:0000269" key="2">
    <source>
    </source>
</evidence>
<evidence type="ECO:0000303" key="3">
    <source>
    </source>
</evidence>
<evidence type="ECO:0000305" key="4"/>
<evidence type="ECO:0000312" key="5">
    <source>
        <dbReference type="EMBL" id="OZG74058.1"/>
    </source>
</evidence>
<evidence type="ECO:0007744" key="6">
    <source>
        <dbReference type="PDB" id="8B74"/>
    </source>
</evidence>